<feature type="chain" id="PRO_1000190908" description="Ketol-acid reductoisomerase (NADP(+))">
    <location>
        <begin position="1"/>
        <end position="341"/>
    </location>
</feature>
<feature type="domain" description="KARI N-terminal Rossmann" evidence="2">
    <location>
        <begin position="1"/>
        <end position="182"/>
    </location>
</feature>
<feature type="domain" description="KARI C-terminal knotted" evidence="3">
    <location>
        <begin position="183"/>
        <end position="328"/>
    </location>
</feature>
<feature type="active site" evidence="1">
    <location>
        <position position="108"/>
    </location>
</feature>
<feature type="binding site" evidence="1">
    <location>
        <begin position="25"/>
        <end position="28"/>
    </location>
    <ligand>
        <name>NADP(+)</name>
        <dbReference type="ChEBI" id="CHEBI:58349"/>
    </ligand>
</feature>
<feature type="binding site" evidence="1">
    <location>
        <position position="48"/>
    </location>
    <ligand>
        <name>NADP(+)</name>
        <dbReference type="ChEBI" id="CHEBI:58349"/>
    </ligand>
</feature>
<feature type="binding site" evidence="1">
    <location>
        <position position="51"/>
    </location>
    <ligand>
        <name>NADP(+)</name>
        <dbReference type="ChEBI" id="CHEBI:58349"/>
    </ligand>
</feature>
<feature type="binding site" evidence="1">
    <location>
        <position position="53"/>
    </location>
    <ligand>
        <name>NADP(+)</name>
        <dbReference type="ChEBI" id="CHEBI:58349"/>
    </ligand>
</feature>
<feature type="binding site" evidence="1">
    <location>
        <begin position="83"/>
        <end position="86"/>
    </location>
    <ligand>
        <name>NADP(+)</name>
        <dbReference type="ChEBI" id="CHEBI:58349"/>
    </ligand>
</feature>
<feature type="binding site" evidence="1">
    <location>
        <position position="134"/>
    </location>
    <ligand>
        <name>NADP(+)</name>
        <dbReference type="ChEBI" id="CHEBI:58349"/>
    </ligand>
</feature>
<feature type="binding site" evidence="1">
    <location>
        <position position="191"/>
    </location>
    <ligand>
        <name>Mg(2+)</name>
        <dbReference type="ChEBI" id="CHEBI:18420"/>
        <label>1</label>
    </ligand>
</feature>
<feature type="binding site" evidence="1">
    <location>
        <position position="191"/>
    </location>
    <ligand>
        <name>Mg(2+)</name>
        <dbReference type="ChEBI" id="CHEBI:18420"/>
        <label>2</label>
    </ligand>
</feature>
<feature type="binding site" evidence="1">
    <location>
        <position position="195"/>
    </location>
    <ligand>
        <name>Mg(2+)</name>
        <dbReference type="ChEBI" id="CHEBI:18420"/>
        <label>1</label>
    </ligand>
</feature>
<feature type="binding site" evidence="1">
    <location>
        <position position="227"/>
    </location>
    <ligand>
        <name>Mg(2+)</name>
        <dbReference type="ChEBI" id="CHEBI:18420"/>
        <label>2</label>
    </ligand>
</feature>
<feature type="binding site" evidence="1">
    <location>
        <position position="231"/>
    </location>
    <ligand>
        <name>Mg(2+)</name>
        <dbReference type="ChEBI" id="CHEBI:18420"/>
        <label>2</label>
    </ligand>
</feature>
<feature type="binding site" evidence="1">
    <location>
        <position position="252"/>
    </location>
    <ligand>
        <name>substrate</name>
    </ligand>
</feature>
<gene>
    <name evidence="1" type="primary">ilvC</name>
    <name type="ordered locus">Achl_2277</name>
</gene>
<dbReference type="EC" id="1.1.1.86" evidence="1"/>
<dbReference type="EMBL" id="CP001341">
    <property type="protein sequence ID" value="ACL40242.1"/>
    <property type="molecule type" value="Genomic_DNA"/>
</dbReference>
<dbReference type="RefSeq" id="WP_015937456.1">
    <property type="nucleotide sequence ID" value="NC_011886.1"/>
</dbReference>
<dbReference type="SMR" id="B8HAS8"/>
<dbReference type="STRING" id="452863.Achl_2277"/>
<dbReference type="KEGG" id="ach:Achl_2277"/>
<dbReference type="eggNOG" id="COG0059">
    <property type="taxonomic scope" value="Bacteria"/>
</dbReference>
<dbReference type="HOGENOM" id="CLU_033821_0_1_11"/>
<dbReference type="OrthoDB" id="9804088at2"/>
<dbReference type="UniPathway" id="UPA00047">
    <property type="reaction ID" value="UER00056"/>
</dbReference>
<dbReference type="UniPathway" id="UPA00049">
    <property type="reaction ID" value="UER00060"/>
</dbReference>
<dbReference type="Proteomes" id="UP000002505">
    <property type="component" value="Chromosome"/>
</dbReference>
<dbReference type="GO" id="GO:0005829">
    <property type="term" value="C:cytosol"/>
    <property type="evidence" value="ECO:0007669"/>
    <property type="project" value="TreeGrafter"/>
</dbReference>
<dbReference type="GO" id="GO:0004455">
    <property type="term" value="F:ketol-acid reductoisomerase activity"/>
    <property type="evidence" value="ECO:0007669"/>
    <property type="project" value="UniProtKB-UniRule"/>
</dbReference>
<dbReference type="GO" id="GO:0000287">
    <property type="term" value="F:magnesium ion binding"/>
    <property type="evidence" value="ECO:0007669"/>
    <property type="project" value="UniProtKB-UniRule"/>
</dbReference>
<dbReference type="GO" id="GO:0050661">
    <property type="term" value="F:NADP binding"/>
    <property type="evidence" value="ECO:0007669"/>
    <property type="project" value="InterPro"/>
</dbReference>
<dbReference type="GO" id="GO:0009097">
    <property type="term" value="P:isoleucine biosynthetic process"/>
    <property type="evidence" value="ECO:0007669"/>
    <property type="project" value="UniProtKB-UniRule"/>
</dbReference>
<dbReference type="GO" id="GO:0009099">
    <property type="term" value="P:L-valine biosynthetic process"/>
    <property type="evidence" value="ECO:0007669"/>
    <property type="project" value="UniProtKB-UniRule"/>
</dbReference>
<dbReference type="FunFam" id="3.40.50.720:FF:000023">
    <property type="entry name" value="Ketol-acid reductoisomerase (NADP(+))"/>
    <property type="match status" value="1"/>
</dbReference>
<dbReference type="Gene3D" id="6.10.240.10">
    <property type="match status" value="1"/>
</dbReference>
<dbReference type="Gene3D" id="3.40.50.720">
    <property type="entry name" value="NAD(P)-binding Rossmann-like Domain"/>
    <property type="match status" value="1"/>
</dbReference>
<dbReference type="HAMAP" id="MF_00435">
    <property type="entry name" value="IlvC"/>
    <property type="match status" value="1"/>
</dbReference>
<dbReference type="InterPro" id="IPR008927">
    <property type="entry name" value="6-PGluconate_DH-like_C_sf"/>
</dbReference>
<dbReference type="InterPro" id="IPR013023">
    <property type="entry name" value="KARI"/>
</dbReference>
<dbReference type="InterPro" id="IPR000506">
    <property type="entry name" value="KARI_C"/>
</dbReference>
<dbReference type="InterPro" id="IPR013116">
    <property type="entry name" value="KARI_N"/>
</dbReference>
<dbReference type="InterPro" id="IPR014359">
    <property type="entry name" value="KARI_prok"/>
</dbReference>
<dbReference type="InterPro" id="IPR036291">
    <property type="entry name" value="NAD(P)-bd_dom_sf"/>
</dbReference>
<dbReference type="NCBIfam" id="TIGR00465">
    <property type="entry name" value="ilvC"/>
    <property type="match status" value="1"/>
</dbReference>
<dbReference type="NCBIfam" id="NF004017">
    <property type="entry name" value="PRK05479.1"/>
    <property type="match status" value="1"/>
</dbReference>
<dbReference type="NCBIfam" id="NF009940">
    <property type="entry name" value="PRK13403.1"/>
    <property type="match status" value="1"/>
</dbReference>
<dbReference type="PANTHER" id="PTHR21371">
    <property type="entry name" value="KETOL-ACID REDUCTOISOMERASE, MITOCHONDRIAL"/>
    <property type="match status" value="1"/>
</dbReference>
<dbReference type="PANTHER" id="PTHR21371:SF1">
    <property type="entry name" value="KETOL-ACID REDUCTOISOMERASE, MITOCHONDRIAL"/>
    <property type="match status" value="1"/>
</dbReference>
<dbReference type="Pfam" id="PF01450">
    <property type="entry name" value="KARI_C"/>
    <property type="match status" value="1"/>
</dbReference>
<dbReference type="Pfam" id="PF07991">
    <property type="entry name" value="KARI_N"/>
    <property type="match status" value="1"/>
</dbReference>
<dbReference type="PIRSF" id="PIRSF000116">
    <property type="entry name" value="IlvC_gammaproteo"/>
    <property type="match status" value="1"/>
</dbReference>
<dbReference type="SUPFAM" id="SSF48179">
    <property type="entry name" value="6-phosphogluconate dehydrogenase C-terminal domain-like"/>
    <property type="match status" value="1"/>
</dbReference>
<dbReference type="SUPFAM" id="SSF51735">
    <property type="entry name" value="NAD(P)-binding Rossmann-fold domains"/>
    <property type="match status" value="1"/>
</dbReference>
<dbReference type="PROSITE" id="PS51851">
    <property type="entry name" value="KARI_C"/>
    <property type="match status" value="1"/>
</dbReference>
<dbReference type="PROSITE" id="PS51850">
    <property type="entry name" value="KARI_N"/>
    <property type="match status" value="1"/>
</dbReference>
<comment type="function">
    <text evidence="1">Involved in the biosynthesis of branched-chain amino acids (BCAA). Catalyzes an alkyl-migration followed by a ketol-acid reduction of (S)-2-acetolactate (S2AL) to yield (R)-2,3-dihydroxy-isovalerate. In the isomerase reaction, S2AL is rearranged via a Mg-dependent methyl migration to produce 3-hydroxy-3-methyl-2-ketobutyrate (HMKB). In the reductase reaction, this 2-ketoacid undergoes a metal-dependent reduction by NADPH to yield (R)-2,3-dihydroxy-isovalerate.</text>
</comment>
<comment type="catalytic activity">
    <reaction evidence="1">
        <text>(2R)-2,3-dihydroxy-3-methylbutanoate + NADP(+) = (2S)-2-acetolactate + NADPH + H(+)</text>
        <dbReference type="Rhea" id="RHEA:22068"/>
        <dbReference type="ChEBI" id="CHEBI:15378"/>
        <dbReference type="ChEBI" id="CHEBI:49072"/>
        <dbReference type="ChEBI" id="CHEBI:57783"/>
        <dbReference type="ChEBI" id="CHEBI:58349"/>
        <dbReference type="ChEBI" id="CHEBI:58476"/>
        <dbReference type="EC" id="1.1.1.86"/>
    </reaction>
</comment>
<comment type="catalytic activity">
    <reaction evidence="1">
        <text>(2R,3R)-2,3-dihydroxy-3-methylpentanoate + NADP(+) = (S)-2-ethyl-2-hydroxy-3-oxobutanoate + NADPH + H(+)</text>
        <dbReference type="Rhea" id="RHEA:13493"/>
        <dbReference type="ChEBI" id="CHEBI:15378"/>
        <dbReference type="ChEBI" id="CHEBI:49256"/>
        <dbReference type="ChEBI" id="CHEBI:49258"/>
        <dbReference type="ChEBI" id="CHEBI:57783"/>
        <dbReference type="ChEBI" id="CHEBI:58349"/>
        <dbReference type="EC" id="1.1.1.86"/>
    </reaction>
</comment>
<comment type="cofactor">
    <cofactor evidence="1">
        <name>Mg(2+)</name>
        <dbReference type="ChEBI" id="CHEBI:18420"/>
    </cofactor>
    <text evidence="1">Binds 2 magnesium ions per subunit.</text>
</comment>
<comment type="pathway">
    <text evidence="1">Amino-acid biosynthesis; L-isoleucine biosynthesis; L-isoleucine from 2-oxobutanoate: step 2/4.</text>
</comment>
<comment type="pathway">
    <text evidence="1">Amino-acid biosynthesis; L-valine biosynthesis; L-valine from pyruvate: step 2/4.</text>
</comment>
<comment type="similarity">
    <text evidence="1">Belongs to the ketol-acid reductoisomerase family.</text>
</comment>
<organism>
    <name type="scientific">Pseudarthrobacter chlorophenolicus (strain ATCC 700700 / DSM 12829 / CIP 107037 / JCM 12360 / KCTC 9906 / NCIMB 13794 / A6)</name>
    <name type="common">Arthrobacter chlorophenolicus</name>
    <dbReference type="NCBI Taxonomy" id="452863"/>
    <lineage>
        <taxon>Bacteria</taxon>
        <taxon>Bacillati</taxon>
        <taxon>Actinomycetota</taxon>
        <taxon>Actinomycetes</taxon>
        <taxon>Micrococcales</taxon>
        <taxon>Micrococcaceae</taxon>
        <taxon>Pseudarthrobacter</taxon>
    </lineage>
</organism>
<accession>B8HAS8</accession>
<evidence type="ECO:0000255" key="1">
    <source>
        <dbReference type="HAMAP-Rule" id="MF_00435"/>
    </source>
</evidence>
<evidence type="ECO:0000255" key="2">
    <source>
        <dbReference type="PROSITE-ProRule" id="PRU01197"/>
    </source>
</evidence>
<evidence type="ECO:0000255" key="3">
    <source>
        <dbReference type="PROSITE-ProRule" id="PRU01198"/>
    </source>
</evidence>
<reference key="1">
    <citation type="submission" date="2009-01" db="EMBL/GenBank/DDBJ databases">
        <title>Complete sequence of chromosome of Arthrobacter chlorophenolicus A6.</title>
        <authorList>
            <consortium name="US DOE Joint Genome Institute"/>
            <person name="Lucas S."/>
            <person name="Copeland A."/>
            <person name="Lapidus A."/>
            <person name="Glavina del Rio T."/>
            <person name="Tice H."/>
            <person name="Bruce D."/>
            <person name="Goodwin L."/>
            <person name="Pitluck S."/>
            <person name="Goltsman E."/>
            <person name="Clum A."/>
            <person name="Larimer F."/>
            <person name="Land M."/>
            <person name="Hauser L."/>
            <person name="Kyrpides N."/>
            <person name="Mikhailova N."/>
            <person name="Jansson J."/>
            <person name="Richardson P."/>
        </authorList>
    </citation>
    <scope>NUCLEOTIDE SEQUENCE [LARGE SCALE GENOMIC DNA]</scope>
    <source>
        <strain>ATCC 700700 / DSM 12829 / CIP 107037 / JCM 12360 / KCTC 9906 / NCIMB 13794 / A6</strain>
    </source>
</reference>
<keyword id="KW-0028">Amino-acid biosynthesis</keyword>
<keyword id="KW-0100">Branched-chain amino acid biosynthesis</keyword>
<keyword id="KW-0460">Magnesium</keyword>
<keyword id="KW-0479">Metal-binding</keyword>
<keyword id="KW-0521">NADP</keyword>
<keyword id="KW-0560">Oxidoreductase</keyword>
<name>ILVC_PSECP</name>
<protein>
    <recommendedName>
        <fullName evidence="1">Ketol-acid reductoisomerase (NADP(+))</fullName>
        <shortName evidence="1">KARI</shortName>
        <ecNumber evidence="1">1.1.1.86</ecNumber>
    </recommendedName>
    <alternativeName>
        <fullName evidence="1">Acetohydroxy-acid isomeroreductase</fullName>
        <shortName evidence="1">AHIR</shortName>
    </alternativeName>
    <alternativeName>
        <fullName evidence="1">Alpha-keto-beta-hydroxylacyl reductoisomerase</fullName>
    </alternativeName>
    <alternativeName>
        <fullName evidence="1">Ketol-acid reductoisomerase type 1</fullName>
    </alternativeName>
    <alternativeName>
        <fullName evidence="1">Ketol-acid reductoisomerase type I</fullName>
    </alternativeName>
</protein>
<proteinExistence type="inferred from homology"/>
<sequence length="341" mass="37278">MTEMFYDDDADLSIIQGRKVAIVGYGSQGHAHAQNLRDSGVEVVIALKDGSKSIAKAEDAGFTVKNVADAAEWADVIMILAPDQHQRSIFTESIKDKLTPGKALAFAHGFNIRFGYIQAPEGVDVILVAPKAPGHTVRREFEAGRGIPDIIAVEQDASGSAWDLAKSYAKAIGGTRAGVIKTTFTEETETDLFGEQSVLCGGVSQLIQYGFETLTEAGYQPQIAYFEVLHELKLIVDLMWEGGIAKQRWSVSDTAEYGDYVSGPRVITPEVKENMKAVLADIQSGAFAKRFIEDQDNGGVEFKELRAKAEQHPIEEVGRELRSLFSWQQQDADYVEGSAAR</sequence>